<name>GAK1B_MOUSE</name>
<dbReference type="EMBL" id="EU797522">
    <property type="protein sequence ID" value="ACE82567.1"/>
    <property type="molecule type" value="mRNA"/>
</dbReference>
<dbReference type="EMBL" id="AF285091">
    <property type="protein sequence ID" value="AAG00502.1"/>
    <property type="molecule type" value="mRNA"/>
</dbReference>
<dbReference type="EMBL" id="AK052367">
    <property type="protein sequence ID" value="BAC34959.1"/>
    <property type="status" value="ALT_INIT"/>
    <property type="molecule type" value="mRNA"/>
</dbReference>
<dbReference type="EMBL" id="AK143522">
    <property type="protein sequence ID" value="BAE25414.1"/>
    <property type="molecule type" value="mRNA"/>
</dbReference>
<dbReference type="EMBL" id="BC056975">
    <property type="protein sequence ID" value="AAH56975.1"/>
    <property type="molecule type" value="mRNA"/>
</dbReference>
<dbReference type="CCDS" id="CCDS17422.1"/>
<dbReference type="RefSeq" id="NP_573450.2">
    <property type="nucleotide sequence ID" value="NM_133187.3"/>
</dbReference>
<dbReference type="RefSeq" id="XP_006502047.1">
    <property type="nucleotide sequence ID" value="XM_006501984.5"/>
</dbReference>
<dbReference type="RefSeq" id="XP_006502048.1">
    <property type="nucleotide sequence ID" value="XM_006501985.2"/>
</dbReference>
<dbReference type="FunCoup" id="Q3UPI1">
    <property type="interactions" value="431"/>
</dbReference>
<dbReference type="STRING" id="10090.ENSMUSP00000114093"/>
<dbReference type="GlyCosmos" id="Q3UPI1">
    <property type="glycosylation" value="2 sites, No reported glycans"/>
</dbReference>
<dbReference type="GlyGen" id="Q3UPI1">
    <property type="glycosylation" value="2 sites"/>
</dbReference>
<dbReference type="iPTMnet" id="Q3UPI1"/>
<dbReference type="PhosphoSitePlus" id="Q3UPI1"/>
<dbReference type="PaxDb" id="10090-ENSMUSP00000114093"/>
<dbReference type="ProteomicsDB" id="275512"/>
<dbReference type="Pumba" id="Q3UPI1"/>
<dbReference type="Antibodypedia" id="2027">
    <property type="antibodies" value="74 antibodies from 17 providers"/>
</dbReference>
<dbReference type="Ensembl" id="ENSMUST00000029567.9">
    <property type="protein sequence ID" value="ENSMUSP00000029567.9"/>
    <property type="gene ID" value="ENSMUSG00000027955.17"/>
</dbReference>
<dbReference type="Ensembl" id="ENSMUST00000118853.8">
    <property type="protein sequence ID" value="ENSMUSP00000114093.2"/>
    <property type="gene ID" value="ENSMUSG00000027955.17"/>
</dbReference>
<dbReference type="GeneID" id="68659"/>
<dbReference type="KEGG" id="mmu:68659"/>
<dbReference type="UCSC" id="uc008pny.2">
    <property type="organism name" value="mouse"/>
</dbReference>
<dbReference type="AGR" id="MGI:1915909"/>
<dbReference type="CTD" id="51313"/>
<dbReference type="MGI" id="MGI:1915909">
    <property type="gene designation" value="Gask1b"/>
</dbReference>
<dbReference type="VEuPathDB" id="HostDB:ENSMUSG00000027955"/>
<dbReference type="eggNOG" id="ENOG502QU38">
    <property type="taxonomic scope" value="Eukaryota"/>
</dbReference>
<dbReference type="GeneTree" id="ENSGT00420000029769"/>
<dbReference type="HOGENOM" id="CLU_033542_2_0_1"/>
<dbReference type="InParanoid" id="Q3UPI1"/>
<dbReference type="OMA" id="PPWFSAQ"/>
<dbReference type="OrthoDB" id="10011371at2759"/>
<dbReference type="PhylomeDB" id="Q3UPI1"/>
<dbReference type="TreeFam" id="TF330994"/>
<dbReference type="BioGRID-ORCS" id="68659">
    <property type="hits" value="2 hits in 79 CRISPR screens"/>
</dbReference>
<dbReference type="ChiTaRS" id="Gask1b">
    <property type="organism name" value="mouse"/>
</dbReference>
<dbReference type="PRO" id="PR:Q3UPI1"/>
<dbReference type="Proteomes" id="UP000000589">
    <property type="component" value="Chromosome 3"/>
</dbReference>
<dbReference type="RNAct" id="Q3UPI1">
    <property type="molecule type" value="protein"/>
</dbReference>
<dbReference type="Bgee" id="ENSMUSG00000027955">
    <property type="expression patterns" value="Expressed in ascending aorta and 203 other cell types or tissues"/>
</dbReference>
<dbReference type="ExpressionAtlas" id="Q3UPI1">
    <property type="expression patterns" value="baseline and differential"/>
</dbReference>
<dbReference type="GO" id="GO:0000139">
    <property type="term" value="C:Golgi membrane"/>
    <property type="evidence" value="ECO:0007669"/>
    <property type="project" value="UniProtKB-SubCell"/>
</dbReference>
<dbReference type="InterPro" id="IPR029207">
    <property type="entry name" value="FAM198"/>
</dbReference>
<dbReference type="PANTHER" id="PTHR15905:SF1">
    <property type="entry name" value="GOLGI-ASSOCIATED KINASE 1B"/>
    <property type="match status" value="1"/>
</dbReference>
<dbReference type="PANTHER" id="PTHR15905">
    <property type="entry name" value="GOLGI-ASSOCIATED KINASE 1B-RELATED"/>
    <property type="match status" value="1"/>
</dbReference>
<dbReference type="Pfam" id="PF15051">
    <property type="entry name" value="FAM198"/>
    <property type="match status" value="1"/>
</dbReference>
<gene>
    <name evidence="6" type="primary">Gask1b</name>
    <name evidence="4" type="synonym">Ened</name>
    <name evidence="6" type="synonym">Fam198b</name>
</gene>
<sequence length="517" mass="58298">MTCPDKPGQLVNWFVCSLCAPRVCKLWSSRRPRTRRNLLLGTACAIYLGFLVSQVGRGSFQHGQATDRGPPNGHDIFKVPFSEIPLDGTLAPPELQGNGSTLQPNVVYITLRSKRSKPANIRGTVKPKRRKKYAVASAAPDQEVLVRPSLIQQEAARAADAEVPGYVQGYLTKVGERPWRVLRGPGVRTRGSNLQQPRARESNIRIYSESAPSWLSKEDIRRMRLLADSEVASILPISKSGTRLLVLEGSTSGSVPGCGPSPCGLLKQPLDMSEVFAFHLDRILGLNRTLPSVSRKLEFIQDGRPRPIILWDSSLASASNDSHSSVKITWGTYQRLLKQKCWLNGRVPRPEWDCTEIHHHEWSKMALFDFLLQIYNRLDTNCCGFRPRKEDACIQNGLRSNCEDQTSVTLAHIIQRKNDPRHLVFINNKGFFDRSEDNLNFKLLEGIREFPESAVSVLKSQHLRQKLLQSLFLDQVYWESQGGRQGIEKLIDVIERRARILITYINAHGARVLPMNE</sequence>
<accession>Q3UPI1</accession>
<accession>B3VSA6</accession>
<accession>Q6PGJ9</accession>
<accession>Q8C781</accession>
<accession>Q9ET25</accession>
<proteinExistence type="evidence at transcript level"/>
<keyword id="KW-0325">Glycoprotein</keyword>
<keyword id="KW-0333">Golgi apparatus</keyword>
<keyword id="KW-0472">Membrane</keyword>
<keyword id="KW-1185">Reference proteome</keyword>
<keyword id="KW-0735">Signal-anchor</keyword>
<keyword id="KW-0812">Transmembrane</keyword>
<keyword id="KW-1133">Transmembrane helix</keyword>
<reference key="1">
    <citation type="journal article" date="2008" name="Int. J. Dev. Biol.">
        <title>Expression of the novel gene Ened during mouse and Xenopus embryonic development.</title>
        <authorList>
            <person name="Meszaros R."/>
            <person name="Strate I."/>
            <person name="Pera E.M."/>
            <person name="Durbeej M."/>
        </authorList>
    </citation>
    <scope>NUCLEOTIDE SEQUENCE [MRNA]</scope>
    <scope>DEVELOPMENTAL STAGE</scope>
    <source>
        <strain>C57BL/6J</strain>
    </source>
</reference>
<reference key="2">
    <citation type="submission" date="2000-07" db="EMBL/GenBank/DDBJ databases">
        <title>Differentially expressed genes in AKR-2B fibroblasts.</title>
        <authorList>
            <person name="Hoppe J."/>
            <person name="Hoppe V."/>
        </authorList>
    </citation>
    <scope>NUCLEOTIDE SEQUENCE [MRNA]</scope>
</reference>
<reference key="3">
    <citation type="journal article" date="2005" name="Science">
        <title>The transcriptional landscape of the mammalian genome.</title>
        <authorList>
            <person name="Carninci P."/>
            <person name="Kasukawa T."/>
            <person name="Katayama S."/>
            <person name="Gough J."/>
            <person name="Frith M.C."/>
            <person name="Maeda N."/>
            <person name="Oyama R."/>
            <person name="Ravasi T."/>
            <person name="Lenhard B."/>
            <person name="Wells C."/>
            <person name="Kodzius R."/>
            <person name="Shimokawa K."/>
            <person name="Bajic V.B."/>
            <person name="Brenner S.E."/>
            <person name="Batalov S."/>
            <person name="Forrest A.R."/>
            <person name="Zavolan M."/>
            <person name="Davis M.J."/>
            <person name="Wilming L.G."/>
            <person name="Aidinis V."/>
            <person name="Allen J.E."/>
            <person name="Ambesi-Impiombato A."/>
            <person name="Apweiler R."/>
            <person name="Aturaliya R.N."/>
            <person name="Bailey T.L."/>
            <person name="Bansal M."/>
            <person name="Baxter L."/>
            <person name="Beisel K.W."/>
            <person name="Bersano T."/>
            <person name="Bono H."/>
            <person name="Chalk A.M."/>
            <person name="Chiu K.P."/>
            <person name="Choudhary V."/>
            <person name="Christoffels A."/>
            <person name="Clutterbuck D.R."/>
            <person name="Crowe M.L."/>
            <person name="Dalla E."/>
            <person name="Dalrymple B.P."/>
            <person name="de Bono B."/>
            <person name="Della Gatta G."/>
            <person name="di Bernardo D."/>
            <person name="Down T."/>
            <person name="Engstrom P."/>
            <person name="Fagiolini M."/>
            <person name="Faulkner G."/>
            <person name="Fletcher C.F."/>
            <person name="Fukushima T."/>
            <person name="Furuno M."/>
            <person name="Futaki S."/>
            <person name="Gariboldi M."/>
            <person name="Georgii-Hemming P."/>
            <person name="Gingeras T.R."/>
            <person name="Gojobori T."/>
            <person name="Green R.E."/>
            <person name="Gustincich S."/>
            <person name="Harbers M."/>
            <person name="Hayashi Y."/>
            <person name="Hensch T.K."/>
            <person name="Hirokawa N."/>
            <person name="Hill D."/>
            <person name="Huminiecki L."/>
            <person name="Iacono M."/>
            <person name="Ikeo K."/>
            <person name="Iwama A."/>
            <person name="Ishikawa T."/>
            <person name="Jakt M."/>
            <person name="Kanapin A."/>
            <person name="Katoh M."/>
            <person name="Kawasawa Y."/>
            <person name="Kelso J."/>
            <person name="Kitamura H."/>
            <person name="Kitano H."/>
            <person name="Kollias G."/>
            <person name="Krishnan S.P."/>
            <person name="Kruger A."/>
            <person name="Kummerfeld S.K."/>
            <person name="Kurochkin I.V."/>
            <person name="Lareau L.F."/>
            <person name="Lazarevic D."/>
            <person name="Lipovich L."/>
            <person name="Liu J."/>
            <person name="Liuni S."/>
            <person name="McWilliam S."/>
            <person name="Madan Babu M."/>
            <person name="Madera M."/>
            <person name="Marchionni L."/>
            <person name="Matsuda H."/>
            <person name="Matsuzawa S."/>
            <person name="Miki H."/>
            <person name="Mignone F."/>
            <person name="Miyake S."/>
            <person name="Morris K."/>
            <person name="Mottagui-Tabar S."/>
            <person name="Mulder N."/>
            <person name="Nakano N."/>
            <person name="Nakauchi H."/>
            <person name="Ng P."/>
            <person name="Nilsson R."/>
            <person name="Nishiguchi S."/>
            <person name="Nishikawa S."/>
            <person name="Nori F."/>
            <person name="Ohara O."/>
            <person name="Okazaki Y."/>
            <person name="Orlando V."/>
            <person name="Pang K.C."/>
            <person name="Pavan W.J."/>
            <person name="Pavesi G."/>
            <person name="Pesole G."/>
            <person name="Petrovsky N."/>
            <person name="Piazza S."/>
            <person name="Reed J."/>
            <person name="Reid J.F."/>
            <person name="Ring B.Z."/>
            <person name="Ringwald M."/>
            <person name="Rost B."/>
            <person name="Ruan Y."/>
            <person name="Salzberg S.L."/>
            <person name="Sandelin A."/>
            <person name="Schneider C."/>
            <person name="Schoenbach C."/>
            <person name="Sekiguchi K."/>
            <person name="Semple C.A."/>
            <person name="Seno S."/>
            <person name="Sessa L."/>
            <person name="Sheng Y."/>
            <person name="Shibata Y."/>
            <person name="Shimada H."/>
            <person name="Shimada K."/>
            <person name="Silva D."/>
            <person name="Sinclair B."/>
            <person name="Sperling S."/>
            <person name="Stupka E."/>
            <person name="Sugiura K."/>
            <person name="Sultana R."/>
            <person name="Takenaka Y."/>
            <person name="Taki K."/>
            <person name="Tammoja K."/>
            <person name="Tan S.L."/>
            <person name="Tang S."/>
            <person name="Taylor M.S."/>
            <person name="Tegner J."/>
            <person name="Teichmann S.A."/>
            <person name="Ueda H.R."/>
            <person name="van Nimwegen E."/>
            <person name="Verardo R."/>
            <person name="Wei C.L."/>
            <person name="Yagi K."/>
            <person name="Yamanishi H."/>
            <person name="Zabarovsky E."/>
            <person name="Zhu S."/>
            <person name="Zimmer A."/>
            <person name="Hide W."/>
            <person name="Bult C."/>
            <person name="Grimmond S.M."/>
            <person name="Teasdale R.D."/>
            <person name="Liu E.T."/>
            <person name="Brusic V."/>
            <person name="Quackenbush J."/>
            <person name="Wahlestedt C."/>
            <person name="Mattick J.S."/>
            <person name="Hume D.A."/>
            <person name="Kai C."/>
            <person name="Sasaki D."/>
            <person name="Tomaru Y."/>
            <person name="Fukuda S."/>
            <person name="Kanamori-Katayama M."/>
            <person name="Suzuki M."/>
            <person name="Aoki J."/>
            <person name="Arakawa T."/>
            <person name="Iida J."/>
            <person name="Imamura K."/>
            <person name="Itoh M."/>
            <person name="Kato T."/>
            <person name="Kawaji H."/>
            <person name="Kawagashira N."/>
            <person name="Kawashima T."/>
            <person name="Kojima M."/>
            <person name="Kondo S."/>
            <person name="Konno H."/>
            <person name="Nakano K."/>
            <person name="Ninomiya N."/>
            <person name="Nishio T."/>
            <person name="Okada M."/>
            <person name="Plessy C."/>
            <person name="Shibata K."/>
            <person name="Shiraki T."/>
            <person name="Suzuki S."/>
            <person name="Tagami M."/>
            <person name="Waki K."/>
            <person name="Watahiki A."/>
            <person name="Okamura-Oho Y."/>
            <person name="Suzuki H."/>
            <person name="Kawai J."/>
            <person name="Hayashizaki Y."/>
        </authorList>
    </citation>
    <scope>NUCLEOTIDE SEQUENCE [LARGE SCALE MRNA]</scope>
    <source>
        <strain>C57BL/6J</strain>
        <tissue>Embryo</tissue>
        <tissue>Heart</tissue>
    </source>
</reference>
<reference key="4">
    <citation type="journal article" date="2004" name="Genome Res.">
        <title>The status, quality, and expansion of the NIH full-length cDNA project: the Mammalian Gene Collection (MGC).</title>
        <authorList>
            <consortium name="The MGC Project Team"/>
        </authorList>
    </citation>
    <scope>NUCLEOTIDE SEQUENCE [LARGE SCALE MRNA]</scope>
    <source>
        <strain>C57BL/6J</strain>
        <tissue>Brain</tissue>
    </source>
</reference>
<organism>
    <name type="scientific">Mus musculus</name>
    <name type="common">Mouse</name>
    <dbReference type="NCBI Taxonomy" id="10090"/>
    <lineage>
        <taxon>Eukaryota</taxon>
        <taxon>Metazoa</taxon>
        <taxon>Chordata</taxon>
        <taxon>Craniata</taxon>
        <taxon>Vertebrata</taxon>
        <taxon>Euteleostomi</taxon>
        <taxon>Mammalia</taxon>
        <taxon>Eutheria</taxon>
        <taxon>Euarchontoglires</taxon>
        <taxon>Glires</taxon>
        <taxon>Rodentia</taxon>
        <taxon>Myomorpha</taxon>
        <taxon>Muroidea</taxon>
        <taxon>Muridae</taxon>
        <taxon>Murinae</taxon>
        <taxon>Mus</taxon>
        <taxon>Mus</taxon>
    </lineage>
</organism>
<feature type="chain" id="PRO_0000288903" description="Golgi-associated kinase 1B">
    <location>
        <begin position="1"/>
        <end position="517"/>
    </location>
</feature>
<feature type="topological domain" description="Cytoplasmic" evidence="2">
    <location>
        <begin position="1"/>
        <end position="36"/>
    </location>
</feature>
<feature type="transmembrane region" description="Helical; Signal-anchor for type II membrane protein" evidence="2">
    <location>
        <begin position="37"/>
        <end position="56"/>
    </location>
</feature>
<feature type="topological domain" description="Extracellular" evidence="2">
    <location>
        <begin position="57"/>
        <end position="517"/>
    </location>
</feature>
<feature type="glycosylation site" description="N-linked (GlcNAc...) asparagine" evidence="2">
    <location>
        <position position="98"/>
    </location>
</feature>
<feature type="glycosylation site" description="N-linked (GlcNAc...) asparagine" evidence="2">
    <location>
        <position position="287"/>
    </location>
</feature>
<feature type="sequence conflict" description="In Ref. 1; ACE82567 and 4; AAH56975." evidence="5" ref="1 4">
    <original>V</original>
    <variation>L</variation>
    <location>
        <position position="275"/>
    </location>
</feature>
<evidence type="ECO:0000250" key="1">
    <source>
        <dbReference type="UniProtKB" id="Q6UWH4"/>
    </source>
</evidence>
<evidence type="ECO:0000255" key="2"/>
<evidence type="ECO:0000269" key="3">
    <source>
    </source>
</evidence>
<evidence type="ECO:0000303" key="4">
    <source>
    </source>
</evidence>
<evidence type="ECO:0000305" key="5"/>
<evidence type="ECO:0000312" key="6">
    <source>
        <dbReference type="MGI" id="MGI:1915909"/>
    </source>
</evidence>
<comment type="subcellular location">
    <subcellularLocation>
        <location evidence="1">Golgi apparatus membrane</location>
        <topology evidence="1">Single-pass type II membrane protein</topology>
    </subcellularLocation>
</comment>
<comment type="developmental stage">
    <text evidence="3">Expressed in heart and midgut at 9.5 day post-conception (dpc). Expressed in floor plate, peripheral nervous system, lens epithelium, skin, midline dorsal aorta, lung, kidney and testis from 10 dpc onwards.</text>
</comment>
<comment type="similarity">
    <text evidence="5">Belongs to the GASK family.</text>
</comment>
<comment type="sequence caution" evidence="5">
    <conflict type="erroneous initiation">
        <sequence resource="EMBL-CDS" id="BAC34959"/>
    </conflict>
    <text>Truncated N-terminus.</text>
</comment>
<protein>
    <recommendedName>
        <fullName evidence="6">Golgi-associated kinase 1B</fullName>
    </recommendedName>
    <alternativeName>
        <fullName evidence="4">Expressed in nerve and epithelium during development</fullName>
    </alternativeName>
    <alternativeName>
        <fullName evidence="6">Protein FAM198B</fullName>
    </alternativeName>
</protein>